<accession>Q4A743</accession>
<evidence type="ECO:0000255" key="1">
    <source>
        <dbReference type="HAMAP-Rule" id="MF_01274"/>
    </source>
</evidence>
<reference key="1">
    <citation type="journal article" date="2005" name="J. Bacteriol.">
        <title>Swine and poultry pathogens: the complete genome sequences of two strains of Mycoplasma hyopneumoniae and a strain of Mycoplasma synoviae.</title>
        <authorList>
            <person name="Vasconcelos A.T.R."/>
            <person name="Ferreira H.B."/>
            <person name="Bizarro C.V."/>
            <person name="Bonatto S.L."/>
            <person name="Carvalho M.O."/>
            <person name="Pinto P.M."/>
            <person name="Almeida D.F."/>
            <person name="Almeida L.G.P."/>
            <person name="Almeida R."/>
            <person name="Alves-Junior L."/>
            <person name="Assuncao E.N."/>
            <person name="Azevedo V.A.C."/>
            <person name="Bogo M.R."/>
            <person name="Brigido M.M."/>
            <person name="Brocchi M."/>
            <person name="Burity H.A."/>
            <person name="Camargo A.A."/>
            <person name="Camargo S.S."/>
            <person name="Carepo M.S."/>
            <person name="Carraro D.M."/>
            <person name="de Mattos Cascardo J.C."/>
            <person name="Castro L.A."/>
            <person name="Cavalcanti G."/>
            <person name="Chemale G."/>
            <person name="Collevatti R.G."/>
            <person name="Cunha C.W."/>
            <person name="Dallagiovanna B."/>
            <person name="Dambros B.P."/>
            <person name="Dellagostin O.A."/>
            <person name="Falcao C."/>
            <person name="Fantinatti-Garboggini F."/>
            <person name="Felipe M.S.S."/>
            <person name="Fiorentin L."/>
            <person name="Franco G.R."/>
            <person name="Freitas N.S.A."/>
            <person name="Frias D."/>
            <person name="Grangeiro T.B."/>
            <person name="Grisard E.C."/>
            <person name="Guimaraes C.T."/>
            <person name="Hungria M."/>
            <person name="Jardim S.N."/>
            <person name="Krieger M.A."/>
            <person name="Laurino J.P."/>
            <person name="Lima L.F.A."/>
            <person name="Lopes M.I."/>
            <person name="Loreto E.L.S."/>
            <person name="Madeira H.M.F."/>
            <person name="Manfio G.P."/>
            <person name="Maranhao A.Q."/>
            <person name="Martinkovics C.T."/>
            <person name="Medeiros S.R.B."/>
            <person name="Moreira M.A.M."/>
            <person name="Neiva M."/>
            <person name="Ramalho-Neto C.E."/>
            <person name="Nicolas M.F."/>
            <person name="Oliveira S.C."/>
            <person name="Paixao R.F.C."/>
            <person name="Pedrosa F.O."/>
            <person name="Pena S.D.J."/>
            <person name="Pereira M."/>
            <person name="Pereira-Ferrari L."/>
            <person name="Piffer I."/>
            <person name="Pinto L.S."/>
            <person name="Potrich D.P."/>
            <person name="Salim A.C.M."/>
            <person name="Santos F.R."/>
            <person name="Schmitt R."/>
            <person name="Schneider M.P.C."/>
            <person name="Schrank A."/>
            <person name="Schrank I.S."/>
            <person name="Schuck A.F."/>
            <person name="Seuanez H.N."/>
            <person name="Silva D.W."/>
            <person name="Silva R."/>
            <person name="Silva S.C."/>
            <person name="Soares C.M.A."/>
            <person name="Souza K.R.L."/>
            <person name="Souza R.C."/>
            <person name="Staats C.C."/>
            <person name="Steffens M.B.R."/>
            <person name="Teixeira S.M.R."/>
            <person name="Urmenyi T.P."/>
            <person name="Vainstein M.H."/>
            <person name="Zuccherato L.W."/>
            <person name="Simpson A.J.G."/>
            <person name="Zaha A."/>
        </authorList>
    </citation>
    <scope>NUCLEOTIDE SEQUENCE [LARGE SCALE GENOMIC DNA]</scope>
    <source>
        <strain>53</strain>
    </source>
</reference>
<organism>
    <name type="scientific">Mycoplasmopsis synoviae (strain 53)</name>
    <name type="common">Mycoplasma synoviae</name>
    <dbReference type="NCBI Taxonomy" id="262723"/>
    <lineage>
        <taxon>Bacteria</taxon>
        <taxon>Bacillati</taxon>
        <taxon>Mycoplasmatota</taxon>
        <taxon>Mycoplasmoidales</taxon>
        <taxon>Metamycoplasmataceae</taxon>
        <taxon>Mycoplasmopsis</taxon>
    </lineage>
</organism>
<keyword id="KW-0067">ATP-binding</keyword>
<keyword id="KW-0173">Coenzyme A biosynthesis</keyword>
<keyword id="KW-0963">Cytoplasm</keyword>
<keyword id="KW-0418">Kinase</keyword>
<keyword id="KW-0547">Nucleotide-binding</keyword>
<keyword id="KW-0630">Potassium</keyword>
<keyword id="KW-1185">Reference proteome</keyword>
<keyword id="KW-0808">Transferase</keyword>
<comment type="function">
    <text evidence="1">Catalyzes the phosphorylation of pantothenate (Pan), the first step in CoA biosynthesis.</text>
</comment>
<comment type="catalytic activity">
    <reaction evidence="1">
        <text>(R)-pantothenate + ATP = (R)-4'-phosphopantothenate + ADP + H(+)</text>
        <dbReference type="Rhea" id="RHEA:16373"/>
        <dbReference type="ChEBI" id="CHEBI:10986"/>
        <dbReference type="ChEBI" id="CHEBI:15378"/>
        <dbReference type="ChEBI" id="CHEBI:29032"/>
        <dbReference type="ChEBI" id="CHEBI:30616"/>
        <dbReference type="ChEBI" id="CHEBI:456216"/>
        <dbReference type="EC" id="2.7.1.33"/>
    </reaction>
</comment>
<comment type="cofactor">
    <cofactor evidence="1">
        <name>NH4(+)</name>
        <dbReference type="ChEBI" id="CHEBI:28938"/>
    </cofactor>
    <cofactor evidence="1">
        <name>K(+)</name>
        <dbReference type="ChEBI" id="CHEBI:29103"/>
    </cofactor>
    <text evidence="1">A monovalent cation. Ammonium or potassium.</text>
</comment>
<comment type="pathway">
    <text evidence="1">Cofactor biosynthesis; coenzyme A biosynthesis; CoA from (R)-pantothenate: step 1/5.</text>
</comment>
<comment type="subunit">
    <text evidence="1">Homodimer.</text>
</comment>
<comment type="subcellular location">
    <subcellularLocation>
        <location evidence="1">Cytoplasm</location>
    </subcellularLocation>
</comment>
<comment type="similarity">
    <text evidence="1">Belongs to the type III pantothenate kinase family.</text>
</comment>
<protein>
    <recommendedName>
        <fullName evidence="1">Type III pantothenate kinase</fullName>
        <ecNumber evidence="1">2.7.1.33</ecNumber>
    </recommendedName>
    <alternativeName>
        <fullName evidence="1">PanK-III</fullName>
    </alternativeName>
    <alternativeName>
        <fullName evidence="1">Pantothenic acid kinase</fullName>
    </alternativeName>
</protein>
<dbReference type="EC" id="2.7.1.33" evidence="1"/>
<dbReference type="EMBL" id="AE017245">
    <property type="protein sequence ID" value="AAZ43428.2"/>
    <property type="molecule type" value="Genomic_DNA"/>
</dbReference>
<dbReference type="RefSeq" id="WP_041351793.1">
    <property type="nucleotide sequence ID" value="NC_007294.1"/>
</dbReference>
<dbReference type="SMR" id="Q4A743"/>
<dbReference type="STRING" id="262723.MS53_0006"/>
<dbReference type="KEGG" id="msy:MS53_0006"/>
<dbReference type="eggNOG" id="COG1521">
    <property type="taxonomic scope" value="Bacteria"/>
</dbReference>
<dbReference type="HOGENOM" id="CLU_1089146_0_0_14"/>
<dbReference type="OrthoDB" id="9804707at2"/>
<dbReference type="UniPathway" id="UPA00241">
    <property type="reaction ID" value="UER00352"/>
</dbReference>
<dbReference type="Proteomes" id="UP000000549">
    <property type="component" value="Chromosome"/>
</dbReference>
<dbReference type="GO" id="GO:0005737">
    <property type="term" value="C:cytoplasm"/>
    <property type="evidence" value="ECO:0007669"/>
    <property type="project" value="UniProtKB-SubCell"/>
</dbReference>
<dbReference type="GO" id="GO:0005524">
    <property type="term" value="F:ATP binding"/>
    <property type="evidence" value="ECO:0007669"/>
    <property type="project" value="UniProtKB-UniRule"/>
</dbReference>
<dbReference type="GO" id="GO:0004594">
    <property type="term" value="F:pantothenate kinase activity"/>
    <property type="evidence" value="ECO:0007669"/>
    <property type="project" value="UniProtKB-UniRule"/>
</dbReference>
<dbReference type="GO" id="GO:0015937">
    <property type="term" value="P:coenzyme A biosynthetic process"/>
    <property type="evidence" value="ECO:0007669"/>
    <property type="project" value="UniProtKB-UniRule"/>
</dbReference>
<dbReference type="Gene3D" id="3.30.420.40">
    <property type="match status" value="2"/>
</dbReference>
<dbReference type="HAMAP" id="MF_01274">
    <property type="entry name" value="Pantothen_kinase_3"/>
    <property type="match status" value="1"/>
</dbReference>
<dbReference type="InterPro" id="IPR043129">
    <property type="entry name" value="ATPase_NBD"/>
</dbReference>
<dbReference type="InterPro" id="IPR004619">
    <property type="entry name" value="Type_III_PanK"/>
</dbReference>
<dbReference type="NCBIfam" id="TIGR00671">
    <property type="entry name" value="baf"/>
    <property type="match status" value="1"/>
</dbReference>
<dbReference type="PANTHER" id="PTHR34265">
    <property type="entry name" value="TYPE III PANTOTHENATE KINASE"/>
    <property type="match status" value="1"/>
</dbReference>
<dbReference type="PANTHER" id="PTHR34265:SF1">
    <property type="entry name" value="TYPE III PANTOTHENATE KINASE"/>
    <property type="match status" value="1"/>
</dbReference>
<dbReference type="Pfam" id="PF03309">
    <property type="entry name" value="Pan_kinase"/>
    <property type="match status" value="1"/>
</dbReference>
<dbReference type="SUPFAM" id="SSF53067">
    <property type="entry name" value="Actin-like ATPase domain"/>
    <property type="match status" value="2"/>
</dbReference>
<proteinExistence type="inferred from homology"/>
<name>COAX_MYCS5</name>
<feature type="chain" id="PRO_0000270881" description="Type III pantothenate kinase">
    <location>
        <begin position="1"/>
        <end position="250"/>
    </location>
</feature>
<feature type="active site" description="Proton acceptor" evidence="1">
    <location>
        <position position="112"/>
    </location>
</feature>
<feature type="binding site" evidence="1">
    <location>
        <begin position="13"/>
        <end position="20"/>
    </location>
    <ligand>
        <name>ATP</name>
        <dbReference type="ChEBI" id="CHEBI:30616"/>
    </ligand>
</feature>
<feature type="binding site" evidence="1">
    <location>
        <begin position="110"/>
        <end position="113"/>
    </location>
    <ligand>
        <name>substrate</name>
    </ligand>
</feature>
<feature type="binding site" evidence="1">
    <location>
        <position position="134"/>
    </location>
    <ligand>
        <name>ATP</name>
        <dbReference type="ChEBI" id="CHEBI:30616"/>
    </ligand>
</feature>
<feature type="binding site" evidence="1">
    <location>
        <position position="186"/>
    </location>
    <ligand>
        <name>substrate</name>
    </ligand>
</feature>
<sequence length="250" mass="28544">MKNNQSKIKLVIDVGNSYLKIGVFHDLELIELKKFKTKYFKISYFENFYKKVFAKYKFNLFIVFGSVVPSIEQKFLDFVKENNLENNFFLINNYLKLSFKVPQEKLGLIGNDLLGAMEYASKETSNALIFLFGTASVALLLEKLNFSGAIIAPGMNFSFNNLLSKAKKLKGFKLHKENVSLWNLNTQDALESGYENLKNGFIKQIICKSNSNYPVYISGGDISNLSPEISHQFVDNIVLKGYLLIYLKNC</sequence>
<gene>
    <name evidence="1" type="primary">coaX</name>
    <name type="ordered locus">MS53_0006</name>
</gene>